<evidence type="ECO:0000255" key="1">
    <source>
        <dbReference type="HAMAP-Rule" id="MF_00023"/>
    </source>
</evidence>
<evidence type="ECO:0000256" key="2">
    <source>
        <dbReference type="SAM" id="MobiDB-lite"/>
    </source>
</evidence>
<keyword id="KW-0963">Cytoplasm</keyword>
<keyword id="KW-1185">Reference proteome</keyword>
<keyword id="KW-0694">RNA-binding</keyword>
<gene>
    <name evidence="1" type="primary">smpB</name>
    <name type="ordered locus">Gmet_1646</name>
</gene>
<dbReference type="EMBL" id="CP000148">
    <property type="protein sequence ID" value="ABB31877.2"/>
    <property type="molecule type" value="Genomic_DNA"/>
</dbReference>
<dbReference type="RefSeq" id="WP_004511418.1">
    <property type="nucleotide sequence ID" value="NC_007517.1"/>
</dbReference>
<dbReference type="SMR" id="Q39V47"/>
<dbReference type="STRING" id="269799.Gmet_1646"/>
<dbReference type="KEGG" id="gme:Gmet_1646"/>
<dbReference type="eggNOG" id="COG0691">
    <property type="taxonomic scope" value="Bacteria"/>
</dbReference>
<dbReference type="HOGENOM" id="CLU_108953_0_1_7"/>
<dbReference type="Proteomes" id="UP000007073">
    <property type="component" value="Chromosome"/>
</dbReference>
<dbReference type="GO" id="GO:0005829">
    <property type="term" value="C:cytosol"/>
    <property type="evidence" value="ECO:0007669"/>
    <property type="project" value="TreeGrafter"/>
</dbReference>
<dbReference type="GO" id="GO:0003723">
    <property type="term" value="F:RNA binding"/>
    <property type="evidence" value="ECO:0007669"/>
    <property type="project" value="UniProtKB-UniRule"/>
</dbReference>
<dbReference type="GO" id="GO:0070929">
    <property type="term" value="P:trans-translation"/>
    <property type="evidence" value="ECO:0007669"/>
    <property type="project" value="UniProtKB-UniRule"/>
</dbReference>
<dbReference type="CDD" id="cd09294">
    <property type="entry name" value="SmpB"/>
    <property type="match status" value="1"/>
</dbReference>
<dbReference type="Gene3D" id="2.40.280.10">
    <property type="match status" value="1"/>
</dbReference>
<dbReference type="HAMAP" id="MF_00023">
    <property type="entry name" value="SmpB"/>
    <property type="match status" value="1"/>
</dbReference>
<dbReference type="InterPro" id="IPR023620">
    <property type="entry name" value="SmpB"/>
</dbReference>
<dbReference type="InterPro" id="IPR000037">
    <property type="entry name" value="SsrA-bd_prot"/>
</dbReference>
<dbReference type="InterPro" id="IPR020081">
    <property type="entry name" value="SsrA-bd_prot_CS"/>
</dbReference>
<dbReference type="NCBIfam" id="NF003843">
    <property type="entry name" value="PRK05422.1"/>
    <property type="match status" value="1"/>
</dbReference>
<dbReference type="NCBIfam" id="TIGR00086">
    <property type="entry name" value="smpB"/>
    <property type="match status" value="1"/>
</dbReference>
<dbReference type="PANTHER" id="PTHR30308:SF2">
    <property type="entry name" value="SSRA-BINDING PROTEIN"/>
    <property type="match status" value="1"/>
</dbReference>
<dbReference type="PANTHER" id="PTHR30308">
    <property type="entry name" value="TMRNA-BINDING COMPONENT OF TRANS-TRANSLATION TAGGING COMPLEX"/>
    <property type="match status" value="1"/>
</dbReference>
<dbReference type="Pfam" id="PF01668">
    <property type="entry name" value="SmpB"/>
    <property type="match status" value="1"/>
</dbReference>
<dbReference type="SUPFAM" id="SSF74982">
    <property type="entry name" value="Small protein B (SmpB)"/>
    <property type="match status" value="1"/>
</dbReference>
<dbReference type="PROSITE" id="PS01317">
    <property type="entry name" value="SSRP"/>
    <property type="match status" value="1"/>
</dbReference>
<organism>
    <name type="scientific">Geobacter metallireducens (strain ATCC 53774 / DSM 7210 / GS-15)</name>
    <dbReference type="NCBI Taxonomy" id="269799"/>
    <lineage>
        <taxon>Bacteria</taxon>
        <taxon>Pseudomonadati</taxon>
        <taxon>Thermodesulfobacteriota</taxon>
        <taxon>Desulfuromonadia</taxon>
        <taxon>Geobacterales</taxon>
        <taxon>Geobacteraceae</taxon>
        <taxon>Geobacter</taxon>
    </lineage>
</organism>
<feature type="chain" id="PRO_0000331048" description="SsrA-binding protein">
    <location>
        <begin position="1"/>
        <end position="153"/>
    </location>
</feature>
<feature type="region of interest" description="Disordered" evidence="2">
    <location>
        <begin position="129"/>
        <end position="153"/>
    </location>
</feature>
<protein>
    <recommendedName>
        <fullName evidence="1">SsrA-binding protein</fullName>
    </recommendedName>
    <alternativeName>
        <fullName evidence="1">Small protein B</fullName>
    </alternativeName>
</protein>
<sequence length="153" mass="17925">MGEKLICNNKKAFHDYFIEERFEAGMVLKGTEVKSLRMGKANLNDSFALVRDGEIFLHNLHINPYDFGNRQNHDPDRLRKLLMHKSEIEKLFGKIREKGYSVVPLRLYFKNGLAKVELGLAKGKKLYDKREDMKKKDQSREMAQALRERSKSH</sequence>
<reference key="1">
    <citation type="journal article" date="2009" name="BMC Microbiol.">
        <title>The genome sequence of Geobacter metallireducens: features of metabolism, physiology and regulation common and dissimilar to Geobacter sulfurreducens.</title>
        <authorList>
            <person name="Aklujkar M."/>
            <person name="Krushkal J."/>
            <person name="DiBartolo G."/>
            <person name="Lapidus A."/>
            <person name="Land M.L."/>
            <person name="Lovley D.R."/>
        </authorList>
    </citation>
    <scope>NUCLEOTIDE SEQUENCE [LARGE SCALE GENOMIC DNA]</scope>
    <source>
        <strain>ATCC 53774 / DSM 7210 / GS-15</strain>
    </source>
</reference>
<proteinExistence type="inferred from homology"/>
<name>SSRP_GEOMG</name>
<comment type="function">
    <text evidence="1">Required for rescue of stalled ribosomes mediated by trans-translation. Binds to transfer-messenger RNA (tmRNA), required for stable association of tmRNA with ribosomes. tmRNA and SmpB together mimic tRNA shape, replacing the anticodon stem-loop with SmpB. tmRNA is encoded by the ssrA gene; the 2 termini fold to resemble tRNA(Ala) and it encodes a 'tag peptide', a short internal open reading frame. During trans-translation Ala-aminoacylated tmRNA acts like a tRNA, entering the A-site of stalled ribosomes, displacing the stalled mRNA. The ribosome then switches to translate the ORF on the tmRNA; the nascent peptide is terminated with the 'tag peptide' encoded by the tmRNA and targeted for degradation. The ribosome is freed to recommence translation, which seems to be the essential function of trans-translation.</text>
</comment>
<comment type="subcellular location">
    <subcellularLocation>
        <location evidence="1">Cytoplasm</location>
    </subcellularLocation>
    <text evidence="1">The tmRNA-SmpB complex associates with stalled 70S ribosomes.</text>
</comment>
<comment type="similarity">
    <text evidence="1">Belongs to the SmpB family.</text>
</comment>
<accession>Q39V47</accession>